<keyword id="KW-1185">Reference proteome</keyword>
<protein>
    <recommendedName>
        <fullName>Gene 47 protein</fullName>
    </recommendedName>
    <alternativeName>
        <fullName>Gp47</fullName>
    </alternativeName>
</protein>
<dbReference type="EMBL" id="Z18946">
    <property type="protein sequence ID" value="CAA79423.1"/>
    <property type="molecule type" value="Genomic_DNA"/>
</dbReference>
<dbReference type="PIR" id="S30992">
    <property type="entry name" value="S30992"/>
</dbReference>
<dbReference type="RefSeq" id="NP_039711.1">
    <property type="nucleotide sequence ID" value="NC_001335.1"/>
</dbReference>
<dbReference type="SMR" id="Q05258"/>
<dbReference type="GeneID" id="2942956"/>
<dbReference type="KEGG" id="vg:2942956"/>
<dbReference type="OrthoDB" id="24188at10239"/>
<dbReference type="Proteomes" id="UP000002123">
    <property type="component" value="Genome"/>
</dbReference>
<dbReference type="InterPro" id="IPR056973">
    <property type="entry name" value="Phage_L5_Gp47"/>
</dbReference>
<dbReference type="Pfam" id="PF23887">
    <property type="entry name" value="Phage_Gene47"/>
    <property type="match status" value="1"/>
</dbReference>
<feature type="chain" id="PRO_0000164773" description="Gene 47 protein">
    <location>
        <begin position="1"/>
        <end position="69"/>
    </location>
</feature>
<accession>Q05258</accession>
<organismHost>
    <name type="scientific">Mycobacterium</name>
    <dbReference type="NCBI Taxonomy" id="1763"/>
</organismHost>
<sequence>MARRATAVTLEDRFHVVAGEPILDTQEGVLIIAFDDGTSRTFNWDKVVDYYYYMTEDEYEQFRRERGAE</sequence>
<proteinExistence type="predicted"/>
<organism>
    <name type="scientific">Mycobacterium phage L5</name>
    <name type="common">Mycobacteriophage L5</name>
    <dbReference type="NCBI Taxonomy" id="31757"/>
    <lineage>
        <taxon>Viruses</taxon>
        <taxon>Duplodnaviria</taxon>
        <taxon>Heunggongvirae</taxon>
        <taxon>Uroviricota</taxon>
        <taxon>Caudoviricetes</taxon>
        <taxon>Fromanvirus</taxon>
    </lineage>
</organism>
<gene>
    <name type="primary">47</name>
</gene>
<reference key="1">
    <citation type="journal article" date="1993" name="Mol. Microbiol.">
        <title>DNA sequence, structure and gene expression of mycobacteriophage L5: a phage system for mycobacterial genetics.</title>
        <authorList>
            <person name="Hatfull G.F."/>
            <person name="Sarkis G.J."/>
        </authorList>
    </citation>
    <scope>NUCLEOTIDE SEQUENCE [LARGE SCALE GENOMIC DNA]</scope>
</reference>
<name>VG47_BPML5</name>